<feature type="chain" id="PRO_1000067001" description="Glucosamine-6-phosphate deaminase">
    <location>
        <begin position="1"/>
        <end position="234"/>
    </location>
</feature>
<feature type="active site" description="Proton acceptor; for enolization step" evidence="1">
    <location>
        <position position="63"/>
    </location>
</feature>
<feature type="active site" description="For ring-opening step" evidence="1">
    <location>
        <position position="129"/>
    </location>
</feature>
<feature type="active site" description="Proton acceptor; for ring-opening step" evidence="1">
    <location>
        <position position="131"/>
    </location>
</feature>
<feature type="active site" description="For ring-opening step" evidence="1">
    <location>
        <position position="136"/>
    </location>
</feature>
<accession>A0AH75</accession>
<organism>
    <name type="scientific">Listeria welshimeri serovar 6b (strain ATCC 35897 / DSM 20650 / CCUG 15529 / CIP 8149 / NCTC 11857 / SLCC 5334 / V8)</name>
    <dbReference type="NCBI Taxonomy" id="386043"/>
    <lineage>
        <taxon>Bacteria</taxon>
        <taxon>Bacillati</taxon>
        <taxon>Bacillota</taxon>
        <taxon>Bacilli</taxon>
        <taxon>Bacillales</taxon>
        <taxon>Listeriaceae</taxon>
        <taxon>Listeria</taxon>
    </lineage>
</organism>
<gene>
    <name evidence="1" type="primary">nagB</name>
    <name type="ordered locus">lwe0939</name>
</gene>
<evidence type="ECO:0000255" key="1">
    <source>
        <dbReference type="HAMAP-Rule" id="MF_01241"/>
    </source>
</evidence>
<protein>
    <recommendedName>
        <fullName evidence="1">Glucosamine-6-phosphate deaminase</fullName>
        <ecNumber evidence="1">3.5.99.6</ecNumber>
    </recommendedName>
    <alternativeName>
        <fullName evidence="1">GlcN6P deaminase</fullName>
        <shortName evidence="1">GNPDA</shortName>
    </alternativeName>
    <alternativeName>
        <fullName evidence="1">Glucosamine-6-phosphate isomerase</fullName>
    </alternativeName>
</protein>
<keyword id="KW-0119">Carbohydrate metabolism</keyword>
<keyword id="KW-0378">Hydrolase</keyword>
<proteinExistence type="inferred from homology"/>
<reference key="1">
    <citation type="journal article" date="2006" name="J. Bacteriol.">
        <title>Whole-genome sequence of Listeria welshimeri reveals common steps in genome reduction with Listeria innocua as compared to Listeria monocytogenes.</title>
        <authorList>
            <person name="Hain T."/>
            <person name="Steinweg C."/>
            <person name="Kuenne C.T."/>
            <person name="Billion A."/>
            <person name="Ghai R."/>
            <person name="Chatterjee S.S."/>
            <person name="Domann E."/>
            <person name="Kaerst U."/>
            <person name="Goesmann A."/>
            <person name="Bekel T."/>
            <person name="Bartels D."/>
            <person name="Kaiser O."/>
            <person name="Meyer F."/>
            <person name="Puehler A."/>
            <person name="Weisshaar B."/>
            <person name="Wehland J."/>
            <person name="Liang C."/>
            <person name="Dandekar T."/>
            <person name="Lampidis R."/>
            <person name="Kreft J."/>
            <person name="Goebel W."/>
            <person name="Chakraborty T."/>
        </authorList>
    </citation>
    <scope>NUCLEOTIDE SEQUENCE [LARGE SCALE GENOMIC DNA]</scope>
    <source>
        <strain>ATCC 35897 / DSM 20650 / CCUG 15529 / CIP 8149 / NCTC 11857 / SLCC 5334 / V8</strain>
    </source>
</reference>
<sequence length="234" mass="25511">MQLITTENKLAGSKKALEIIEKGITTGEVNTLGLATGSTPETLYAELVKSDVDTTNVTTTNLDEYVGLAASDPNSYHYYMNNLLFSKKAFKESFLPNGEATDAEAECARYEEILTEHPIDIQVLGIGTNGHIGFNEPGTSFDSLTHKVVLTDSTREANKRFFEREEDVPTHAYSMGIKSIMNAKKIILLAFGENKAQAIKETIKGPVDVNCPASVLQNHPDVTVILDNEAASLL</sequence>
<dbReference type="EC" id="3.5.99.6" evidence="1"/>
<dbReference type="EMBL" id="AM263198">
    <property type="protein sequence ID" value="CAK20357.1"/>
    <property type="molecule type" value="Genomic_DNA"/>
</dbReference>
<dbReference type="RefSeq" id="WP_011701769.1">
    <property type="nucleotide sequence ID" value="NC_008555.1"/>
</dbReference>
<dbReference type="SMR" id="A0AH75"/>
<dbReference type="STRING" id="386043.lwe0939"/>
<dbReference type="GeneID" id="61188830"/>
<dbReference type="KEGG" id="lwe:lwe0939"/>
<dbReference type="eggNOG" id="COG0363">
    <property type="taxonomic scope" value="Bacteria"/>
</dbReference>
<dbReference type="HOGENOM" id="CLU_049611_1_0_9"/>
<dbReference type="OrthoDB" id="9791139at2"/>
<dbReference type="UniPathway" id="UPA00629">
    <property type="reaction ID" value="UER00684"/>
</dbReference>
<dbReference type="Proteomes" id="UP000000779">
    <property type="component" value="Chromosome"/>
</dbReference>
<dbReference type="GO" id="GO:0005737">
    <property type="term" value="C:cytoplasm"/>
    <property type="evidence" value="ECO:0007669"/>
    <property type="project" value="TreeGrafter"/>
</dbReference>
<dbReference type="GO" id="GO:0004342">
    <property type="term" value="F:glucosamine-6-phosphate deaminase activity"/>
    <property type="evidence" value="ECO:0007669"/>
    <property type="project" value="UniProtKB-UniRule"/>
</dbReference>
<dbReference type="GO" id="GO:0042802">
    <property type="term" value="F:identical protein binding"/>
    <property type="evidence" value="ECO:0007669"/>
    <property type="project" value="TreeGrafter"/>
</dbReference>
<dbReference type="GO" id="GO:0005975">
    <property type="term" value="P:carbohydrate metabolic process"/>
    <property type="evidence" value="ECO:0007669"/>
    <property type="project" value="InterPro"/>
</dbReference>
<dbReference type="GO" id="GO:0006043">
    <property type="term" value="P:glucosamine catabolic process"/>
    <property type="evidence" value="ECO:0007669"/>
    <property type="project" value="TreeGrafter"/>
</dbReference>
<dbReference type="GO" id="GO:0006046">
    <property type="term" value="P:N-acetylglucosamine catabolic process"/>
    <property type="evidence" value="ECO:0007669"/>
    <property type="project" value="TreeGrafter"/>
</dbReference>
<dbReference type="GO" id="GO:0019262">
    <property type="term" value="P:N-acetylneuraminate catabolic process"/>
    <property type="evidence" value="ECO:0007669"/>
    <property type="project" value="UniProtKB-UniRule"/>
</dbReference>
<dbReference type="CDD" id="cd01399">
    <property type="entry name" value="GlcN6P_deaminase"/>
    <property type="match status" value="1"/>
</dbReference>
<dbReference type="FunFam" id="3.40.50.1360:FF:000003">
    <property type="entry name" value="Glucosamine-6-phosphate deaminase"/>
    <property type="match status" value="1"/>
</dbReference>
<dbReference type="Gene3D" id="3.40.50.1360">
    <property type="match status" value="1"/>
</dbReference>
<dbReference type="HAMAP" id="MF_01241">
    <property type="entry name" value="GlcN6P_deamin"/>
    <property type="match status" value="1"/>
</dbReference>
<dbReference type="InterPro" id="IPR006148">
    <property type="entry name" value="Glc/Gal-6P_isomerase"/>
</dbReference>
<dbReference type="InterPro" id="IPR004547">
    <property type="entry name" value="Glucosamine6P_isomerase"/>
</dbReference>
<dbReference type="InterPro" id="IPR018321">
    <property type="entry name" value="Glucosamine6P_isomerase_CS"/>
</dbReference>
<dbReference type="InterPro" id="IPR037171">
    <property type="entry name" value="NagB/RpiA_transferase-like"/>
</dbReference>
<dbReference type="PANTHER" id="PTHR11280">
    <property type="entry name" value="GLUCOSAMINE-6-PHOSPHATE ISOMERASE"/>
    <property type="match status" value="1"/>
</dbReference>
<dbReference type="PANTHER" id="PTHR11280:SF5">
    <property type="entry name" value="GLUCOSAMINE-6-PHOSPHATE ISOMERASE"/>
    <property type="match status" value="1"/>
</dbReference>
<dbReference type="Pfam" id="PF01182">
    <property type="entry name" value="Glucosamine_iso"/>
    <property type="match status" value="1"/>
</dbReference>
<dbReference type="SUPFAM" id="SSF100950">
    <property type="entry name" value="NagB/RpiA/CoA transferase-like"/>
    <property type="match status" value="1"/>
</dbReference>
<dbReference type="PROSITE" id="PS01161">
    <property type="entry name" value="GLC_GALNAC_ISOMERASE"/>
    <property type="match status" value="1"/>
</dbReference>
<comment type="function">
    <text evidence="1">Catalyzes the reversible isomerization-deamination of glucosamine 6-phosphate (GlcN6P) to form fructose 6-phosphate (Fru6P) and ammonium ion.</text>
</comment>
<comment type="catalytic activity">
    <reaction evidence="1">
        <text>alpha-D-glucosamine 6-phosphate + H2O = beta-D-fructose 6-phosphate + NH4(+)</text>
        <dbReference type="Rhea" id="RHEA:12172"/>
        <dbReference type="ChEBI" id="CHEBI:15377"/>
        <dbReference type="ChEBI" id="CHEBI:28938"/>
        <dbReference type="ChEBI" id="CHEBI:57634"/>
        <dbReference type="ChEBI" id="CHEBI:75989"/>
        <dbReference type="EC" id="3.5.99.6"/>
    </reaction>
</comment>
<comment type="pathway">
    <text evidence="1">Amino-sugar metabolism; N-acetylneuraminate degradation; D-fructose 6-phosphate from N-acetylneuraminate: step 5/5.</text>
</comment>
<comment type="similarity">
    <text evidence="1">Belongs to the glucosamine/galactosamine-6-phosphate isomerase family. NagB subfamily.</text>
</comment>
<name>NAGB_LISW6</name>